<keyword id="KW-0025">Alternative splicing</keyword>
<keyword id="KW-0106">Calcium</keyword>
<keyword id="KW-1003">Cell membrane</keyword>
<keyword id="KW-1015">Disulfide bond</keyword>
<keyword id="KW-0325">Glycoprotein</keyword>
<keyword id="KW-0333">Golgi apparatus</keyword>
<keyword id="KW-0378">Hydrolase</keyword>
<keyword id="KW-0460">Magnesium</keyword>
<keyword id="KW-0472">Membrane</keyword>
<keyword id="KW-1267">Proteomics identification</keyword>
<keyword id="KW-1185">Reference proteome</keyword>
<keyword id="KW-0964">Secreted</keyword>
<keyword id="KW-0735">Signal-anchor</keyword>
<keyword id="KW-0812">Transmembrane</keyword>
<keyword id="KW-1133">Transmembrane helix</keyword>
<proteinExistence type="evidence at protein level"/>
<reference key="1">
    <citation type="journal article" date="1998" name="Genomics">
        <title>The CD39-like gene family: identification of three new human members (CD39L2, CD39L3, and CD39L4), their murine homologues, and a member of the gene family from Drosophila melanogaster.</title>
        <authorList>
            <person name="Chadwick B.P."/>
            <person name="Frischauf A.-M."/>
        </authorList>
    </citation>
    <scope>NUCLEOTIDE SEQUENCE [MRNA] (ISOFORM 1)</scope>
    <scope>VARIANTS VAL-138 AND GLU-202</scope>
    <source>
        <tissue>Keratinocyte</tissue>
    </source>
</reference>
<reference key="2">
    <citation type="journal article" date="2003" name="Biochemistry">
        <title>Bacterial expression, characterization, and disulfide bond determination of soluble human NTPDase6 (CD39L2) nucleotidase: implications for structure and function.</title>
        <authorList>
            <person name="Ivanenkov V.V."/>
            <person name="Murphy-Piedmonte D.M."/>
            <person name="Kirley T.L."/>
        </authorList>
    </citation>
    <scope>NUCLEOTIDE SEQUENCE [MRNA] (ISOFORM 1)</scope>
    <scope>GLYCOSYLATION AT ASN-220 AND ASN-284</scope>
    <scope>DISULFIDE BONDS</scope>
    <scope>MUTAGENESIS OF CYS-215</scope>
    <scope>VARIANTS ASN-14 AND GLU-202</scope>
    <scope>BIOPHYSICOCHEMICAL PROPERTIES</scope>
    <scope>CATALYTIC ACTIVITY</scope>
    <scope>FUNCTION</scope>
    <scope>SUBSTRATE SPECIFICITY</scope>
    <scope>COFACTOR</scope>
    <scope>ACTIVITY REGULATION</scope>
</reference>
<reference key="3">
    <citation type="journal article" date="2007" name="BMC Genomics">
        <title>The full-ORF clone resource of the German cDNA consortium.</title>
        <authorList>
            <person name="Bechtel S."/>
            <person name="Rosenfelder H."/>
            <person name="Duda A."/>
            <person name="Schmidt C.P."/>
            <person name="Ernst U."/>
            <person name="Wellenreuther R."/>
            <person name="Mehrle A."/>
            <person name="Schuster C."/>
            <person name="Bahr A."/>
            <person name="Bloecker H."/>
            <person name="Heubner D."/>
            <person name="Hoerlein A."/>
            <person name="Michel G."/>
            <person name="Wedler H."/>
            <person name="Koehrer K."/>
            <person name="Ottenwaelder B."/>
            <person name="Poustka A."/>
            <person name="Wiemann S."/>
            <person name="Schupp I."/>
        </authorList>
    </citation>
    <scope>NUCLEOTIDE SEQUENCE [LARGE SCALE MRNA] (ISOFORM 2)</scope>
    <scope>VARIANT GLU-202</scope>
    <source>
        <tissue>Amygdala</tissue>
    </source>
</reference>
<reference key="4">
    <citation type="journal article" date="2001" name="Nature">
        <title>The DNA sequence and comparative analysis of human chromosome 20.</title>
        <authorList>
            <person name="Deloukas P."/>
            <person name="Matthews L.H."/>
            <person name="Ashurst J.L."/>
            <person name="Burton J."/>
            <person name="Gilbert J.G.R."/>
            <person name="Jones M."/>
            <person name="Stavrides G."/>
            <person name="Almeida J.P."/>
            <person name="Babbage A.K."/>
            <person name="Bagguley C.L."/>
            <person name="Bailey J."/>
            <person name="Barlow K.F."/>
            <person name="Bates K.N."/>
            <person name="Beard L.M."/>
            <person name="Beare D.M."/>
            <person name="Beasley O.P."/>
            <person name="Bird C.P."/>
            <person name="Blakey S.E."/>
            <person name="Bridgeman A.M."/>
            <person name="Brown A.J."/>
            <person name="Buck D."/>
            <person name="Burrill W.D."/>
            <person name="Butler A.P."/>
            <person name="Carder C."/>
            <person name="Carter N.P."/>
            <person name="Chapman J.C."/>
            <person name="Clamp M."/>
            <person name="Clark G."/>
            <person name="Clark L.N."/>
            <person name="Clark S.Y."/>
            <person name="Clee C.M."/>
            <person name="Clegg S."/>
            <person name="Cobley V.E."/>
            <person name="Collier R.E."/>
            <person name="Connor R.E."/>
            <person name="Corby N.R."/>
            <person name="Coulson A."/>
            <person name="Coville G.J."/>
            <person name="Deadman R."/>
            <person name="Dhami P.D."/>
            <person name="Dunn M."/>
            <person name="Ellington A.G."/>
            <person name="Frankland J.A."/>
            <person name="Fraser A."/>
            <person name="French L."/>
            <person name="Garner P."/>
            <person name="Grafham D.V."/>
            <person name="Griffiths C."/>
            <person name="Griffiths M.N.D."/>
            <person name="Gwilliam R."/>
            <person name="Hall R.E."/>
            <person name="Hammond S."/>
            <person name="Harley J.L."/>
            <person name="Heath P.D."/>
            <person name="Ho S."/>
            <person name="Holden J.L."/>
            <person name="Howden P.J."/>
            <person name="Huckle E."/>
            <person name="Hunt A.R."/>
            <person name="Hunt S.E."/>
            <person name="Jekosch K."/>
            <person name="Johnson C.M."/>
            <person name="Johnson D."/>
            <person name="Kay M.P."/>
            <person name="Kimberley A.M."/>
            <person name="King A."/>
            <person name="Knights A."/>
            <person name="Laird G.K."/>
            <person name="Lawlor S."/>
            <person name="Lehvaeslaiho M.H."/>
            <person name="Leversha M.A."/>
            <person name="Lloyd C."/>
            <person name="Lloyd D.M."/>
            <person name="Lovell J.D."/>
            <person name="Marsh V.L."/>
            <person name="Martin S.L."/>
            <person name="McConnachie L.J."/>
            <person name="McLay K."/>
            <person name="McMurray A.A."/>
            <person name="Milne S.A."/>
            <person name="Mistry D."/>
            <person name="Moore M.J.F."/>
            <person name="Mullikin J.C."/>
            <person name="Nickerson T."/>
            <person name="Oliver K."/>
            <person name="Parker A."/>
            <person name="Patel R."/>
            <person name="Pearce T.A.V."/>
            <person name="Peck A.I."/>
            <person name="Phillimore B.J.C.T."/>
            <person name="Prathalingam S.R."/>
            <person name="Plumb R.W."/>
            <person name="Ramsay H."/>
            <person name="Rice C.M."/>
            <person name="Ross M.T."/>
            <person name="Scott C.E."/>
            <person name="Sehra H.K."/>
            <person name="Shownkeen R."/>
            <person name="Sims S."/>
            <person name="Skuce C.D."/>
            <person name="Smith M.L."/>
            <person name="Soderlund C."/>
            <person name="Steward C.A."/>
            <person name="Sulston J.E."/>
            <person name="Swann R.M."/>
            <person name="Sycamore N."/>
            <person name="Taylor R."/>
            <person name="Tee L."/>
            <person name="Thomas D.W."/>
            <person name="Thorpe A."/>
            <person name="Tracey A."/>
            <person name="Tromans A.C."/>
            <person name="Vaudin M."/>
            <person name="Wall M."/>
            <person name="Wallis J.M."/>
            <person name="Whitehead S.L."/>
            <person name="Whittaker P."/>
            <person name="Willey D.L."/>
            <person name="Williams L."/>
            <person name="Williams S.A."/>
            <person name="Wilming L."/>
            <person name="Wray P.W."/>
            <person name="Hubbard T."/>
            <person name="Durbin R.M."/>
            <person name="Bentley D.R."/>
            <person name="Beck S."/>
            <person name="Rogers J."/>
        </authorList>
    </citation>
    <scope>NUCLEOTIDE SEQUENCE [LARGE SCALE GENOMIC DNA]</scope>
</reference>
<reference key="5">
    <citation type="submission" date="2005-09" db="EMBL/GenBank/DDBJ databases">
        <authorList>
            <person name="Mural R.J."/>
            <person name="Istrail S."/>
            <person name="Sutton G.G."/>
            <person name="Florea L."/>
            <person name="Halpern A.L."/>
            <person name="Mobarry C.M."/>
            <person name="Lippert R."/>
            <person name="Walenz B."/>
            <person name="Shatkay H."/>
            <person name="Dew I."/>
            <person name="Miller J.R."/>
            <person name="Flanigan M.J."/>
            <person name="Edwards N.J."/>
            <person name="Bolanos R."/>
            <person name="Fasulo D."/>
            <person name="Halldorsson B.V."/>
            <person name="Hannenhalli S."/>
            <person name="Turner R."/>
            <person name="Yooseph S."/>
            <person name="Lu F."/>
            <person name="Nusskern D.R."/>
            <person name="Shue B.C."/>
            <person name="Zheng X.H."/>
            <person name="Zhong F."/>
            <person name="Delcher A.L."/>
            <person name="Huson D.H."/>
            <person name="Kravitz S.A."/>
            <person name="Mouchard L."/>
            <person name="Reinert K."/>
            <person name="Remington K.A."/>
            <person name="Clark A.G."/>
            <person name="Waterman M.S."/>
            <person name="Eichler E.E."/>
            <person name="Adams M.D."/>
            <person name="Hunkapiller M.W."/>
            <person name="Myers E.W."/>
            <person name="Venter J.C."/>
        </authorList>
    </citation>
    <scope>NUCLEOTIDE SEQUENCE [LARGE SCALE GENOMIC DNA]</scope>
    <scope>VARIANT GLU-202</scope>
</reference>
<reference key="6">
    <citation type="journal article" date="2004" name="Genome Res.">
        <title>The status, quality, and expansion of the NIH full-length cDNA project: the Mammalian Gene Collection (MGC).</title>
        <authorList>
            <consortium name="The MGC Project Team"/>
        </authorList>
    </citation>
    <scope>NUCLEOTIDE SEQUENCE [LARGE SCALE MRNA] (ISOFORM 3)</scope>
    <scope>VARIANT GLU-202</scope>
    <source>
        <tissue>Placenta</tissue>
    </source>
</reference>
<reference key="7">
    <citation type="journal article" date="2000" name="Biochemistry">
        <title>CD39L2, a gene encoding a human nucleoside diphosphatase, predominantly expressed in the heart.</title>
        <authorList>
            <person name="Yeung G."/>
            <person name="Mulero J.J."/>
            <person name="McGowan D.W."/>
            <person name="Bajwa S.S."/>
            <person name="Ford J.E."/>
        </authorList>
    </citation>
    <scope>SUBCELLULAR LOCATION</scope>
    <scope>TISSUE SPECIFICITY</scope>
    <scope>GLYCOSYLATION</scope>
    <scope>COFACTOR</scope>
    <scope>CATALYTIC ACTIVITY</scope>
    <scope>FUNCTION</scope>
    <scope>PROTEOLYTIC CLEAVAGE</scope>
</reference>
<reference key="8">
    <citation type="journal article" date="2000" name="J. Biol. Chem.">
        <title>Expression and characterization of soluble and membrane-bound human nucleoside triphosphate diphosphohydrolase 6 (CD39L2).</title>
        <authorList>
            <person name="Hicks-Berger C.A."/>
            <person name="Chadwick B.P."/>
            <person name="Frischauf A.M."/>
            <person name="Kirley T.L."/>
        </authorList>
    </citation>
    <scope>SUBCELLULAR LOCATION</scope>
    <scope>CATALYTIC ACTIVITY</scope>
    <scope>FUNCTION</scope>
    <scope>SUBSTRATE SPECIFICITY</scope>
    <scope>COFACTOR</scope>
    <scope>GLYCOSYLATION</scope>
</reference>
<name>ENTP6_HUMAN</name>
<dbReference type="EC" id="3.6.1.6" evidence="4 5 6"/>
<dbReference type="EMBL" id="AF039916">
    <property type="protein sequence ID" value="AAC39883.1"/>
    <property type="molecule type" value="mRNA"/>
</dbReference>
<dbReference type="EMBL" id="AY327581">
    <property type="protein sequence ID" value="AAP92131.1"/>
    <property type="molecule type" value="mRNA"/>
</dbReference>
<dbReference type="EMBL" id="AL834158">
    <property type="protein sequence ID" value="CAD38864.2"/>
    <property type="molecule type" value="mRNA"/>
</dbReference>
<dbReference type="EMBL" id="AL035252">
    <property type="status" value="NOT_ANNOTATED_CDS"/>
    <property type="molecule type" value="Genomic_DNA"/>
</dbReference>
<dbReference type="EMBL" id="CH471133">
    <property type="protein sequence ID" value="EAX10095.1"/>
    <property type="molecule type" value="Genomic_DNA"/>
</dbReference>
<dbReference type="EMBL" id="CH471133">
    <property type="protein sequence ID" value="EAX10097.1"/>
    <property type="molecule type" value="Genomic_DNA"/>
</dbReference>
<dbReference type="EMBL" id="CH471133">
    <property type="protein sequence ID" value="EAX10098.1"/>
    <property type="molecule type" value="Genomic_DNA"/>
</dbReference>
<dbReference type="EMBL" id="BC025980">
    <property type="protein sequence ID" value="AAH25980.1"/>
    <property type="molecule type" value="mRNA"/>
</dbReference>
<dbReference type="CCDS" id="CCDS13170.1">
    <molecule id="O75354-1"/>
</dbReference>
<dbReference type="CCDS" id="CCDS46586.1">
    <molecule id="O75354-2"/>
</dbReference>
<dbReference type="CCDS" id="CCDS82604.1">
    <molecule id="O75354-3"/>
</dbReference>
<dbReference type="RefSeq" id="NP_001107561.2">
    <molecule id="O75354-2"/>
    <property type="nucleotide sequence ID" value="NM_001114089.4"/>
</dbReference>
<dbReference type="RefSeq" id="NP_001238.3">
    <molecule id="O75354-1"/>
    <property type="nucleotide sequence ID" value="NM_001247.5"/>
</dbReference>
<dbReference type="RefSeq" id="NP_001304870.2">
    <molecule id="O75354-3"/>
    <property type="nucleotide sequence ID" value="NM_001317941.3"/>
</dbReference>
<dbReference type="RefSeq" id="NP_001309307.2">
    <molecule id="O75354-1"/>
    <property type="nucleotide sequence ID" value="NM_001322378.2"/>
</dbReference>
<dbReference type="RefSeq" id="NP_001309308.1">
    <property type="nucleotide sequence ID" value="NM_001322379.1"/>
</dbReference>
<dbReference type="RefSeq" id="NP_001309309.1">
    <property type="nucleotide sequence ID" value="NM_001322380.1"/>
</dbReference>
<dbReference type="RefSeq" id="NP_001309310.1">
    <property type="nucleotide sequence ID" value="NM_001322381.1"/>
</dbReference>
<dbReference type="RefSeq" id="NP_001309311.1">
    <property type="nucleotide sequence ID" value="NM_001322382.1"/>
</dbReference>
<dbReference type="RefSeq" id="NP_001309312.1">
    <property type="nucleotide sequence ID" value="NM_001322383.1"/>
</dbReference>
<dbReference type="RefSeq" id="NP_001309313.1">
    <property type="nucleotide sequence ID" value="NM_001322384.1"/>
</dbReference>
<dbReference type="RefSeq" id="NP_001309314.1">
    <property type="nucleotide sequence ID" value="NM_001322385.1"/>
</dbReference>
<dbReference type="RefSeq" id="NP_001309315.1">
    <property type="nucleotide sequence ID" value="NM_001322386.1"/>
</dbReference>
<dbReference type="RefSeq" id="NP_001309316.1">
    <property type="nucleotide sequence ID" value="NM_001322387.1"/>
</dbReference>
<dbReference type="RefSeq" id="NP_001309317.1">
    <property type="nucleotide sequence ID" value="NM_001322388.1"/>
</dbReference>
<dbReference type="RefSeq" id="NP_001309318.1">
    <property type="nucleotide sequence ID" value="NM_001322389.1"/>
</dbReference>
<dbReference type="RefSeq" id="NP_001309319.1">
    <property type="nucleotide sequence ID" value="NM_001322390.1"/>
</dbReference>
<dbReference type="RefSeq" id="NP_001309320.1">
    <property type="nucleotide sequence ID" value="NM_001322391.1"/>
</dbReference>
<dbReference type="RefSeq" id="NP_001309321.1">
    <property type="nucleotide sequence ID" value="NM_001322392.1"/>
</dbReference>
<dbReference type="RefSeq" id="NP_001309322.1">
    <property type="nucleotide sequence ID" value="NM_001322393.1"/>
</dbReference>
<dbReference type="RefSeq" id="NP_001309323.1">
    <property type="nucleotide sequence ID" value="NM_001322394.1"/>
</dbReference>
<dbReference type="RefSeq" id="NP_001309324.1">
    <property type="nucleotide sequence ID" value="NM_001322395.1"/>
</dbReference>
<dbReference type="RefSeq" id="NP_001309325.1">
    <property type="nucleotide sequence ID" value="NM_001322396.1"/>
</dbReference>
<dbReference type="RefSeq" id="NP_001309326.1">
    <property type="nucleotide sequence ID" value="NM_001322397.1"/>
</dbReference>
<dbReference type="RefSeq" id="NP_001309327.1">
    <property type="nucleotide sequence ID" value="NM_001322398.1"/>
</dbReference>
<dbReference type="RefSeq" id="XP_006723728.1">
    <property type="nucleotide sequence ID" value="XM_006723665.2"/>
</dbReference>
<dbReference type="RefSeq" id="XP_011527698.1">
    <property type="nucleotide sequence ID" value="XM_011529396.1"/>
</dbReference>
<dbReference type="RefSeq" id="XP_011527699.1">
    <property type="nucleotide sequence ID" value="XM_011529397.1"/>
</dbReference>
<dbReference type="RefSeq" id="XP_047296547.1">
    <molecule id="O75354-1"/>
    <property type="nucleotide sequence ID" value="XM_047440591.1"/>
</dbReference>
<dbReference type="RefSeq" id="XP_047296548.1">
    <molecule id="O75354-3"/>
    <property type="nucleotide sequence ID" value="XM_047440592.1"/>
</dbReference>
<dbReference type="RefSeq" id="XP_047296549.1">
    <molecule id="O75354-3"/>
    <property type="nucleotide sequence ID" value="XM_047440593.1"/>
</dbReference>
<dbReference type="SMR" id="O75354"/>
<dbReference type="BioGRID" id="107393">
    <property type="interactions" value="74"/>
</dbReference>
<dbReference type="FunCoup" id="O75354">
    <property type="interactions" value="1627"/>
</dbReference>
<dbReference type="IntAct" id="O75354">
    <property type="interactions" value="38"/>
</dbReference>
<dbReference type="MINT" id="O75354"/>
<dbReference type="STRING" id="9606.ENSP00000365840"/>
<dbReference type="GlyCosmos" id="O75354">
    <property type="glycosylation" value="3 sites, 1 glycan"/>
</dbReference>
<dbReference type="GlyGen" id="O75354">
    <property type="glycosylation" value="6 sites, 3 O-linked glycans (4 sites)"/>
</dbReference>
<dbReference type="iPTMnet" id="O75354"/>
<dbReference type="PhosphoSitePlus" id="O75354"/>
<dbReference type="BioMuta" id="ENTPD6"/>
<dbReference type="jPOST" id="O75354"/>
<dbReference type="MassIVE" id="O75354"/>
<dbReference type="PaxDb" id="9606-ENSP00000365840"/>
<dbReference type="PeptideAtlas" id="O75354"/>
<dbReference type="ProteomicsDB" id="49920">
    <molecule id="O75354-1"/>
</dbReference>
<dbReference type="ProteomicsDB" id="49921">
    <molecule id="O75354-2"/>
</dbReference>
<dbReference type="ProteomicsDB" id="63663"/>
<dbReference type="Antibodypedia" id="24986">
    <property type="antibodies" value="104 antibodies from 27 providers"/>
</dbReference>
<dbReference type="DNASU" id="955"/>
<dbReference type="Ensembl" id="ENST00000354989.9">
    <molecule id="O75354-2"/>
    <property type="protein sequence ID" value="ENSP00000347084.5"/>
    <property type="gene ID" value="ENSG00000197586.13"/>
</dbReference>
<dbReference type="Ensembl" id="ENST00000360031.6">
    <molecule id="O75354-3"/>
    <property type="protein sequence ID" value="ENSP00000353131.2"/>
    <property type="gene ID" value="ENSG00000197586.13"/>
</dbReference>
<dbReference type="Ensembl" id="ENST00000376652.9">
    <molecule id="O75354-1"/>
    <property type="protein sequence ID" value="ENSP00000365840.4"/>
    <property type="gene ID" value="ENSG00000197586.13"/>
</dbReference>
<dbReference type="GeneID" id="955"/>
<dbReference type="KEGG" id="hsa:955"/>
<dbReference type="MANE-Select" id="ENST00000376652.9">
    <property type="protein sequence ID" value="ENSP00000365840.4"/>
    <property type="RefSeq nucleotide sequence ID" value="NM_001247.5"/>
    <property type="RefSeq protein sequence ID" value="NP_001238.3"/>
</dbReference>
<dbReference type="UCSC" id="uc002wuj.3">
    <molecule id="O75354-1"/>
    <property type="organism name" value="human"/>
</dbReference>
<dbReference type="AGR" id="HGNC:3368"/>
<dbReference type="CTD" id="955"/>
<dbReference type="DisGeNET" id="955"/>
<dbReference type="GeneCards" id="ENTPD6"/>
<dbReference type="HGNC" id="HGNC:3368">
    <property type="gene designation" value="ENTPD6"/>
</dbReference>
<dbReference type="HPA" id="ENSG00000197586">
    <property type="expression patterns" value="Low tissue specificity"/>
</dbReference>
<dbReference type="MIM" id="603160">
    <property type="type" value="gene"/>
</dbReference>
<dbReference type="neXtProt" id="NX_O75354"/>
<dbReference type="OpenTargets" id="ENSG00000197586"/>
<dbReference type="PharmGKB" id="PA27803"/>
<dbReference type="VEuPathDB" id="HostDB:ENSG00000197586"/>
<dbReference type="eggNOG" id="KOG1385">
    <property type="taxonomic scope" value="Eukaryota"/>
</dbReference>
<dbReference type="GeneTree" id="ENSGT01110000267162"/>
<dbReference type="InParanoid" id="O75354"/>
<dbReference type="OMA" id="CLVENMN"/>
<dbReference type="OrthoDB" id="6372431at2759"/>
<dbReference type="PAN-GO" id="O75354">
    <property type="GO annotations" value="5 GO annotations based on evolutionary models"/>
</dbReference>
<dbReference type="PhylomeDB" id="O75354"/>
<dbReference type="TreeFam" id="TF315029"/>
<dbReference type="BRENDA" id="3.6.1.6">
    <property type="organism ID" value="2681"/>
</dbReference>
<dbReference type="PathwayCommons" id="O75354"/>
<dbReference type="Reactome" id="R-HSA-8850843">
    <property type="pathway name" value="Phosphate bond hydrolysis by NTPDase proteins"/>
</dbReference>
<dbReference type="SignaLink" id="O75354"/>
<dbReference type="BioGRID-ORCS" id="955">
    <property type="hits" value="10 hits in 1161 CRISPR screens"/>
</dbReference>
<dbReference type="ChiTaRS" id="ENTPD6">
    <property type="organism name" value="human"/>
</dbReference>
<dbReference type="GeneWiki" id="ENTPD6"/>
<dbReference type="GenomeRNAi" id="955"/>
<dbReference type="Pharos" id="O75354">
    <property type="development level" value="Tbio"/>
</dbReference>
<dbReference type="PRO" id="PR:O75354"/>
<dbReference type="Proteomes" id="UP000005640">
    <property type="component" value="Chromosome 20"/>
</dbReference>
<dbReference type="RNAct" id="O75354">
    <property type="molecule type" value="protein"/>
</dbReference>
<dbReference type="Bgee" id="ENSG00000197586">
    <property type="expression patterns" value="Expressed in apex of heart and 175 other cell types or tissues"/>
</dbReference>
<dbReference type="ExpressionAtlas" id="O75354">
    <property type="expression patterns" value="baseline and differential"/>
</dbReference>
<dbReference type="GO" id="GO:0009986">
    <property type="term" value="C:cell surface"/>
    <property type="evidence" value="ECO:0007669"/>
    <property type="project" value="Ensembl"/>
</dbReference>
<dbReference type="GO" id="GO:0005576">
    <property type="term" value="C:extracellular region"/>
    <property type="evidence" value="ECO:0000314"/>
    <property type="project" value="UniProtKB"/>
</dbReference>
<dbReference type="GO" id="GO:0005615">
    <property type="term" value="C:extracellular space"/>
    <property type="evidence" value="ECO:0007669"/>
    <property type="project" value="Ensembl"/>
</dbReference>
<dbReference type="GO" id="GO:0005794">
    <property type="term" value="C:Golgi apparatus"/>
    <property type="evidence" value="ECO:0000314"/>
    <property type="project" value="HPA"/>
</dbReference>
<dbReference type="GO" id="GO:0000139">
    <property type="term" value="C:Golgi membrane"/>
    <property type="evidence" value="ECO:0007669"/>
    <property type="project" value="UniProtKB-SubCell"/>
</dbReference>
<dbReference type="GO" id="GO:0005886">
    <property type="term" value="C:plasma membrane"/>
    <property type="evidence" value="ECO:0000314"/>
    <property type="project" value="UniProtKB"/>
</dbReference>
<dbReference type="GO" id="GO:0036384">
    <property type="term" value="F:CDP phosphatase activity"/>
    <property type="evidence" value="ECO:0000314"/>
    <property type="project" value="UniProtKB"/>
</dbReference>
<dbReference type="GO" id="GO:0004382">
    <property type="term" value="F:GDP phosphatase activity"/>
    <property type="evidence" value="ECO:0000314"/>
    <property type="project" value="UniProtKB"/>
</dbReference>
<dbReference type="GO" id="GO:0008894">
    <property type="term" value="F:guanosine-5'-triphosphate,3'-diphosphate diphosphatase activity"/>
    <property type="evidence" value="ECO:0007669"/>
    <property type="project" value="Ensembl"/>
</dbReference>
<dbReference type="GO" id="GO:1990003">
    <property type="term" value="F:IDP phosphatase activity"/>
    <property type="evidence" value="ECO:0000314"/>
    <property type="project" value="UniProtKB"/>
</dbReference>
<dbReference type="GO" id="GO:0017110">
    <property type="term" value="F:nucleoside diphosphate phosphatase activity"/>
    <property type="evidence" value="ECO:0000314"/>
    <property type="project" value="UniProtKB"/>
</dbReference>
<dbReference type="GO" id="GO:0017111">
    <property type="term" value="F:ribonucleoside triphosphate phosphatase activity"/>
    <property type="evidence" value="ECO:0007669"/>
    <property type="project" value="Ensembl"/>
</dbReference>
<dbReference type="GO" id="GO:0045134">
    <property type="term" value="F:UDP phosphatase activity"/>
    <property type="evidence" value="ECO:0000314"/>
    <property type="project" value="UniProtKB"/>
</dbReference>
<dbReference type="GO" id="GO:0051592">
    <property type="term" value="P:response to calcium ion"/>
    <property type="evidence" value="ECO:0007669"/>
    <property type="project" value="Ensembl"/>
</dbReference>
<dbReference type="GO" id="GO:0032026">
    <property type="term" value="P:response to magnesium ion"/>
    <property type="evidence" value="ECO:0007669"/>
    <property type="project" value="Ensembl"/>
</dbReference>
<dbReference type="CDD" id="cd24115">
    <property type="entry name" value="ASKHA_NBD_NTPDase6"/>
    <property type="match status" value="1"/>
</dbReference>
<dbReference type="FunFam" id="3.30.420.150:FF:000004">
    <property type="entry name" value="Ectonucleoside triphosphate diphosphohydrolase 5"/>
    <property type="match status" value="1"/>
</dbReference>
<dbReference type="FunFam" id="3.30.420.40:FF:000052">
    <property type="entry name" value="Ectonucleoside triphosphate diphosphohydrolase 5"/>
    <property type="match status" value="1"/>
</dbReference>
<dbReference type="Gene3D" id="3.30.420.40">
    <property type="match status" value="1"/>
</dbReference>
<dbReference type="Gene3D" id="3.30.420.150">
    <property type="entry name" value="Exopolyphosphatase. Domain 2"/>
    <property type="match status" value="1"/>
</dbReference>
<dbReference type="InterPro" id="IPR000407">
    <property type="entry name" value="GDA1_CD39_NTPase"/>
</dbReference>
<dbReference type="PANTHER" id="PTHR11782">
    <property type="entry name" value="ADENOSINE/GUANOSINE DIPHOSPHATASE"/>
    <property type="match status" value="1"/>
</dbReference>
<dbReference type="PANTHER" id="PTHR11782:SF99">
    <property type="entry name" value="ECTONUCLEOSIDE TRIPHOSPHATE DIPHOSPHOHYDROLASE 6"/>
    <property type="match status" value="1"/>
</dbReference>
<dbReference type="Pfam" id="PF01150">
    <property type="entry name" value="GDA1_CD39"/>
    <property type="match status" value="1"/>
</dbReference>
<dbReference type="PROSITE" id="PS01238">
    <property type="entry name" value="GDA1_CD39_NTPASE"/>
    <property type="match status" value="1"/>
</dbReference>
<sequence>MKKGIRYETSRKTSYIFQQPQHGPWQTRMRKISNHGSLRVAKVAYPLGLCVGVFIYVAYIKWHRATATQAFFSITRAAPGARWGQQAHSPLGTAADGHEVFYGIMFDAGSTGTRVHVFQFTRPPRETPTLTHETFKALKPGLSAYADDVEKSAQGIRELLDVAKQDIPFDFWKATPLVLKATAGLRLLPGEKAQKLLQKVKKVFKASPFLVGDDCVSIMNGTDEGVSAWITINFLTGSLKTPGGSSVGMLDLGGGSTQIAFLPRVEGTLQASPPGYLTALRMFNRTYKLYSYSYLGLGLMSARLAILGGVEGQPAKDGKELVSPCLSPSFKGEWEHAEVTYRVSGQKAAASLHELCAARVSEVLQNRVHRTEEVKHVDFYAFSYYYDLAAGVGLIDAEKGGSLVVGDFEIAAKYVCRTLETQPQSSPFSCMDLTYVSLLLQEFGFPRSKVLKLTRKIDNVETSWALGAIFHYIDSLNRQKSPAS</sequence>
<gene>
    <name type="primary">ENTPD6</name>
    <name type="synonym">CD39L2</name>
    <name type="synonym">IL6ST2</name>
</gene>
<accession>O75354</accession>
<accession>A6NCX6</accession>
<accession>D3DW49</accession>
<accession>Q5QPJ2</accession>
<accession>Q5QPJ5</accession>
<accession>Q7Z5B5</accession>
<accession>Q8N3H3</accession>
<accession>Q8TAS7</accession>
<accession>Q9UJD1</accession>
<feature type="chain" id="PRO_0000209913" description="Ectonucleoside triphosphate diphosphohydrolase 6">
    <location>
        <begin position="1"/>
        <end position="484"/>
    </location>
</feature>
<feature type="topological domain" description="Cytoplasmic" evidence="3">
    <location>
        <begin position="1"/>
        <end position="39"/>
    </location>
</feature>
<feature type="transmembrane region" description="Helical; Signal-anchor for type II membrane protein" evidence="3">
    <location>
        <begin position="40"/>
        <end position="60"/>
    </location>
</feature>
<feature type="topological domain" description="Lumenal" evidence="3">
    <location>
        <begin position="61"/>
        <end position="484"/>
    </location>
</feature>
<feature type="active site" description="Proton acceptor" evidence="1">
    <location>
        <position position="224"/>
    </location>
</feature>
<feature type="glycosylation site" description="N-linked (GlcNAc...) asparagine" evidence="6">
    <location>
        <position position="220"/>
    </location>
</feature>
<feature type="glycosylation site" description="N-linked (GlcNAc...) asparagine" evidence="6">
    <location>
        <position position="284"/>
    </location>
</feature>
<feature type="disulfide bond" evidence="6">
    <location>
        <begin position="325"/>
        <end position="356"/>
    </location>
</feature>
<feature type="disulfide bond" evidence="6">
    <location>
        <begin position="416"/>
        <end position="430"/>
    </location>
</feature>
<feature type="splice variant" id="VSP_039122" description="In isoform 2." evidence="12">
    <original>MKKGIRYETSRKTSYIFQ</original>
    <variation>M</variation>
    <location>
        <begin position="1"/>
        <end position="18"/>
    </location>
</feature>
<feature type="splice variant" id="VSP_054314" description="In isoform 3." evidence="11">
    <location>
        <position position="19"/>
    </location>
</feature>
<feature type="sequence variant" id="VAR_027812" description="In dbSNP:rs2076559." evidence="6">
    <original>S</original>
    <variation>N</variation>
    <location>
        <position position="14"/>
    </location>
</feature>
<feature type="sequence variant" id="VAR_017863" description="In dbSNP:rs1044567." evidence="9">
    <original>L</original>
    <variation>V</variation>
    <location>
        <position position="138"/>
    </location>
</feature>
<feature type="sequence variant" id="VAR_050309" description="In dbSNP:rs34007133.">
    <original>R</original>
    <variation>Q</variation>
    <location>
        <position position="157"/>
    </location>
</feature>
<feature type="sequence variant" id="VAR_027813" description="In dbSNP:rs6050446." evidence="6 7 8 9 10">
    <original>K</original>
    <variation>E</variation>
    <location>
        <position position="202"/>
    </location>
</feature>
<feature type="sequence variant" id="VAR_027814" description="In dbSNP:rs6138541.">
    <original>S</original>
    <variation>N</variation>
    <location>
        <position position="323"/>
    </location>
</feature>
<feature type="mutagenesis site" description="Does not affect nucleoside-triphosphatase activity. Does not affeet KM for GDP." evidence="6">
    <original>C</original>
    <variation>S</variation>
    <location>
        <position position="215"/>
    </location>
</feature>
<protein>
    <recommendedName>
        <fullName>Ectonucleoside triphosphate diphosphohydrolase 6</fullName>
        <shortName>NTPDase 6</shortName>
        <ecNumber evidence="4 5 6">3.6.1.6</ecNumber>
    </recommendedName>
    <alternativeName>
        <fullName>CD39 antigen-like 2</fullName>
    </alternativeName>
</protein>
<comment type="function">
    <text evidence="4 5 6">Catalyzes the hydrolysis of nucleoside triphosphates and diphosphates in a calcium- or magnesium-dependent manner. Has a strong preference for nucleoside diphosphates, preferentially hydrolyzes GDP, IDP, and UDP, with slower hydrolysis of CDP, ITP, GTP, CTP, ADP, and UTP and virtually no hydrolysis of ATP (PubMed:10948193, PubMed:11041856, PubMed:14529283). The membrane bound form might support glycosylation reactions in the Golgi apparatus and, when released from cells, might catalyze the hydrolysis of extracellular nucleotides (PubMed:10948193, PubMed:11041856, PubMed:14529283).</text>
</comment>
<comment type="catalytic activity">
    <reaction evidence="4 5 6">
        <text>a ribonucleoside 5'-diphosphate + H2O = a ribonucleoside 5'-phosphate + phosphate + H(+)</text>
        <dbReference type="Rhea" id="RHEA:36799"/>
        <dbReference type="ChEBI" id="CHEBI:15377"/>
        <dbReference type="ChEBI" id="CHEBI:15378"/>
        <dbReference type="ChEBI" id="CHEBI:43474"/>
        <dbReference type="ChEBI" id="CHEBI:57930"/>
        <dbReference type="ChEBI" id="CHEBI:58043"/>
        <dbReference type="EC" id="3.6.1.6"/>
    </reaction>
</comment>
<comment type="catalytic activity">
    <reaction evidence="4 6">
        <text>IDP + H2O = IMP + phosphate + H(+)</text>
        <dbReference type="Rhea" id="RHEA:35207"/>
        <dbReference type="ChEBI" id="CHEBI:15377"/>
        <dbReference type="ChEBI" id="CHEBI:15378"/>
        <dbReference type="ChEBI" id="CHEBI:43474"/>
        <dbReference type="ChEBI" id="CHEBI:58053"/>
        <dbReference type="ChEBI" id="CHEBI:58280"/>
        <dbReference type="EC" id="3.6.1.6"/>
    </reaction>
</comment>
<comment type="catalytic activity">
    <reaction evidence="4 6">
        <text>GDP + H2O = GMP + phosphate + H(+)</text>
        <dbReference type="Rhea" id="RHEA:22156"/>
        <dbReference type="ChEBI" id="CHEBI:15377"/>
        <dbReference type="ChEBI" id="CHEBI:15378"/>
        <dbReference type="ChEBI" id="CHEBI:43474"/>
        <dbReference type="ChEBI" id="CHEBI:58115"/>
        <dbReference type="ChEBI" id="CHEBI:58189"/>
        <dbReference type="EC" id="3.6.1.6"/>
    </reaction>
</comment>
<comment type="catalytic activity">
    <reaction evidence="4 6">
        <text>UDP + H2O = UMP + phosphate + H(+)</text>
        <dbReference type="Rhea" id="RHEA:64876"/>
        <dbReference type="ChEBI" id="CHEBI:15377"/>
        <dbReference type="ChEBI" id="CHEBI:15378"/>
        <dbReference type="ChEBI" id="CHEBI:43474"/>
        <dbReference type="ChEBI" id="CHEBI:57865"/>
        <dbReference type="ChEBI" id="CHEBI:58223"/>
        <dbReference type="EC" id="3.6.1.6"/>
    </reaction>
</comment>
<comment type="cofactor">
    <cofactor evidence="4 5 6">
        <name>Ca(2+)</name>
        <dbReference type="ChEBI" id="CHEBI:29108"/>
    </cofactor>
    <cofactor evidence="4 5 6">
        <name>Mg(2+)</name>
        <dbReference type="ChEBI" id="CHEBI:18420"/>
    </cofactor>
    <text evidence="6">Strongly and equally activated by either Ca(2+) or Mg(2+).</text>
</comment>
<comment type="activity regulation">
    <text evidence="6">Glycosylation does not appear to be required for enzymatic activity.</text>
</comment>
<comment type="biophysicochemical properties">
    <kinetics>
        <KM evidence="6">130 uM for GDP (in the presence of Ca(2+))</KM>
        <Vmax evidence="6">60000.0 umol/h/mg enzyme with GDP as substrate</Vmax>
    </kinetics>
    <phDependence>
        <text evidence="6">Optimum pH is 7.0 to 7.4.</text>
    </phDependence>
</comment>
<comment type="subunit">
    <text evidence="4">Monomer.</text>
</comment>
<comment type="subcellular location">
    <subcellularLocation>
        <location evidence="2">Golgi apparatus membrane</location>
        <topology evidence="3">Single-pass type II membrane protein</topology>
    </subcellularLocation>
    <subcellularLocation>
        <location evidence="4 5">Secreted</location>
    </subcellularLocation>
    <subcellularLocation>
        <location evidence="4 5">Cell membrane</location>
        <topology evidence="3">Single-pass type II membrane protein</topology>
    </subcellularLocation>
    <text evidence="4 5">Exists as a secreted and membrane-bound forms in the medium of transfected cells, the secreted form is predominant.</text>
</comment>
<comment type="alternative products">
    <event type="alternative splicing"/>
    <isoform>
        <id>O75354-1</id>
        <name>1</name>
        <sequence type="displayed"/>
    </isoform>
    <isoform>
        <id>O75354-2</id>
        <name>2</name>
        <sequence type="described" ref="VSP_039122"/>
    </isoform>
    <isoform>
        <id>O75354-3</id>
        <name>3</name>
        <sequence type="described" ref="VSP_054314"/>
    </isoform>
</comment>
<comment type="tissue specificity">
    <text evidence="5">Expressed in most tissues, but predominantly in heart.</text>
</comment>
<comment type="PTM">
    <text evidence="14">The secreted form may be produced by intracellular processing.</text>
</comment>
<comment type="PTM">
    <text evidence="4 5">N-glycosylated.</text>
</comment>
<comment type="similarity">
    <text evidence="13">Belongs to the GDA1/CD39 NTPase family.</text>
</comment>
<evidence type="ECO:0000250" key="1">
    <source>
        <dbReference type="UniProtKB" id="O35795"/>
    </source>
</evidence>
<evidence type="ECO:0000250" key="2">
    <source>
        <dbReference type="UniProtKB" id="Q9ER31"/>
    </source>
</evidence>
<evidence type="ECO:0000255" key="3"/>
<evidence type="ECO:0000269" key="4">
    <source>
    </source>
</evidence>
<evidence type="ECO:0000269" key="5">
    <source>
    </source>
</evidence>
<evidence type="ECO:0000269" key="6">
    <source>
    </source>
</evidence>
<evidence type="ECO:0000269" key="7">
    <source>
    </source>
</evidence>
<evidence type="ECO:0000269" key="8">
    <source>
    </source>
</evidence>
<evidence type="ECO:0000269" key="9">
    <source>
    </source>
</evidence>
<evidence type="ECO:0000269" key="10">
    <source ref="5"/>
</evidence>
<evidence type="ECO:0000303" key="11">
    <source>
    </source>
</evidence>
<evidence type="ECO:0000303" key="12">
    <source>
    </source>
</evidence>
<evidence type="ECO:0000305" key="13"/>
<evidence type="ECO:0000305" key="14">
    <source>
    </source>
</evidence>
<organism>
    <name type="scientific">Homo sapiens</name>
    <name type="common">Human</name>
    <dbReference type="NCBI Taxonomy" id="9606"/>
    <lineage>
        <taxon>Eukaryota</taxon>
        <taxon>Metazoa</taxon>
        <taxon>Chordata</taxon>
        <taxon>Craniata</taxon>
        <taxon>Vertebrata</taxon>
        <taxon>Euteleostomi</taxon>
        <taxon>Mammalia</taxon>
        <taxon>Eutheria</taxon>
        <taxon>Euarchontoglires</taxon>
        <taxon>Primates</taxon>
        <taxon>Haplorrhini</taxon>
        <taxon>Catarrhini</taxon>
        <taxon>Hominidae</taxon>
        <taxon>Homo</taxon>
    </lineage>
</organism>